<feature type="chain" id="PRO_1000126633" description="Large ribosomal subunit protein bL31">
    <location>
        <begin position="1"/>
        <end position="71"/>
    </location>
</feature>
<feature type="binding site" evidence="1">
    <location>
        <position position="16"/>
    </location>
    <ligand>
        <name>Zn(2+)</name>
        <dbReference type="ChEBI" id="CHEBI:29105"/>
    </ligand>
</feature>
<feature type="binding site" evidence="1">
    <location>
        <position position="18"/>
    </location>
    <ligand>
        <name>Zn(2+)</name>
        <dbReference type="ChEBI" id="CHEBI:29105"/>
    </ligand>
</feature>
<feature type="binding site" evidence="1">
    <location>
        <position position="38"/>
    </location>
    <ligand>
        <name>Zn(2+)</name>
        <dbReference type="ChEBI" id="CHEBI:29105"/>
    </ligand>
</feature>
<feature type="binding site" evidence="1">
    <location>
        <position position="41"/>
    </location>
    <ligand>
        <name>Zn(2+)</name>
        <dbReference type="ChEBI" id="CHEBI:29105"/>
    </ligand>
</feature>
<organism>
    <name type="scientific">Francisella tularensis subsp. novicida (strain U112)</name>
    <dbReference type="NCBI Taxonomy" id="401614"/>
    <lineage>
        <taxon>Bacteria</taxon>
        <taxon>Pseudomonadati</taxon>
        <taxon>Pseudomonadota</taxon>
        <taxon>Gammaproteobacteria</taxon>
        <taxon>Thiotrichales</taxon>
        <taxon>Francisellaceae</taxon>
        <taxon>Francisella</taxon>
    </lineage>
</organism>
<accession>A0Q4M1</accession>
<comment type="function">
    <text evidence="1">Binds the 23S rRNA.</text>
</comment>
<comment type="cofactor">
    <cofactor evidence="1">
        <name>Zn(2+)</name>
        <dbReference type="ChEBI" id="CHEBI:29105"/>
    </cofactor>
    <text evidence="1">Binds 1 zinc ion per subunit.</text>
</comment>
<comment type="subunit">
    <text evidence="1">Part of the 50S ribosomal subunit.</text>
</comment>
<comment type="similarity">
    <text evidence="1">Belongs to the bacterial ribosomal protein bL31 family. Type A subfamily.</text>
</comment>
<name>RL31_FRATN</name>
<reference key="1">
    <citation type="journal article" date="2007" name="Genome Biol.">
        <title>Comparison of Francisella tularensis genomes reveals evolutionary events associated with the emergence of human pathogenic strains.</title>
        <authorList>
            <person name="Rohmer L."/>
            <person name="Fong C."/>
            <person name="Abmayr S."/>
            <person name="Wasnick M."/>
            <person name="Larson Freeman T.J."/>
            <person name="Radey M."/>
            <person name="Guina T."/>
            <person name="Svensson K."/>
            <person name="Hayden H.S."/>
            <person name="Jacobs M."/>
            <person name="Gallagher L.A."/>
            <person name="Manoil C."/>
            <person name="Ernst R.K."/>
            <person name="Drees B."/>
            <person name="Buckley D."/>
            <person name="Haugen E."/>
            <person name="Bovee D."/>
            <person name="Zhou Y."/>
            <person name="Chang J."/>
            <person name="Levy R."/>
            <person name="Lim R."/>
            <person name="Gillett W."/>
            <person name="Guenthener D."/>
            <person name="Kang A."/>
            <person name="Shaffer S.A."/>
            <person name="Taylor G."/>
            <person name="Chen J."/>
            <person name="Gallis B."/>
            <person name="D'Argenio D.A."/>
            <person name="Forsman M."/>
            <person name="Olson M.V."/>
            <person name="Goodlett D.R."/>
            <person name="Kaul R."/>
            <person name="Miller S.I."/>
            <person name="Brittnacher M.J."/>
        </authorList>
    </citation>
    <scope>NUCLEOTIDE SEQUENCE [LARGE SCALE GENOMIC DNA]</scope>
    <source>
        <strain>U112</strain>
    </source>
</reference>
<keyword id="KW-0479">Metal-binding</keyword>
<keyword id="KW-0687">Ribonucleoprotein</keyword>
<keyword id="KW-0689">Ribosomal protein</keyword>
<keyword id="KW-0694">RNA-binding</keyword>
<keyword id="KW-0699">rRNA-binding</keyword>
<keyword id="KW-0862">Zinc</keyword>
<dbReference type="EMBL" id="CP000439">
    <property type="protein sequence ID" value="ABK89186.1"/>
    <property type="molecule type" value="Genomic_DNA"/>
</dbReference>
<dbReference type="RefSeq" id="WP_011733590.1">
    <property type="nucleotide sequence ID" value="NZ_CP009633.1"/>
</dbReference>
<dbReference type="SMR" id="A0Q4M1"/>
<dbReference type="GeneID" id="75264223"/>
<dbReference type="KEGG" id="ftn:FTN_0278"/>
<dbReference type="KEGG" id="ftx:AW25_1765"/>
<dbReference type="BioCyc" id="FTUL401614:G1G75-289-MONOMER"/>
<dbReference type="Proteomes" id="UP000000762">
    <property type="component" value="Chromosome"/>
</dbReference>
<dbReference type="GO" id="GO:1990904">
    <property type="term" value="C:ribonucleoprotein complex"/>
    <property type="evidence" value="ECO:0007669"/>
    <property type="project" value="UniProtKB-KW"/>
</dbReference>
<dbReference type="GO" id="GO:0005840">
    <property type="term" value="C:ribosome"/>
    <property type="evidence" value="ECO:0007669"/>
    <property type="project" value="UniProtKB-KW"/>
</dbReference>
<dbReference type="GO" id="GO:0046872">
    <property type="term" value="F:metal ion binding"/>
    <property type="evidence" value="ECO:0007669"/>
    <property type="project" value="UniProtKB-KW"/>
</dbReference>
<dbReference type="GO" id="GO:0019843">
    <property type="term" value="F:rRNA binding"/>
    <property type="evidence" value="ECO:0007669"/>
    <property type="project" value="UniProtKB-KW"/>
</dbReference>
<dbReference type="GO" id="GO:0003735">
    <property type="term" value="F:structural constituent of ribosome"/>
    <property type="evidence" value="ECO:0007669"/>
    <property type="project" value="InterPro"/>
</dbReference>
<dbReference type="GO" id="GO:0006412">
    <property type="term" value="P:translation"/>
    <property type="evidence" value="ECO:0007669"/>
    <property type="project" value="UniProtKB-UniRule"/>
</dbReference>
<dbReference type="Gene3D" id="4.10.830.30">
    <property type="entry name" value="Ribosomal protein L31"/>
    <property type="match status" value="1"/>
</dbReference>
<dbReference type="HAMAP" id="MF_00501">
    <property type="entry name" value="Ribosomal_bL31_1"/>
    <property type="match status" value="1"/>
</dbReference>
<dbReference type="InterPro" id="IPR034704">
    <property type="entry name" value="Ribosomal_bL28/bL31-like_sf"/>
</dbReference>
<dbReference type="InterPro" id="IPR002150">
    <property type="entry name" value="Ribosomal_bL31"/>
</dbReference>
<dbReference type="InterPro" id="IPR027491">
    <property type="entry name" value="Ribosomal_bL31_A"/>
</dbReference>
<dbReference type="InterPro" id="IPR042105">
    <property type="entry name" value="Ribosomal_bL31_sf"/>
</dbReference>
<dbReference type="NCBIfam" id="TIGR00105">
    <property type="entry name" value="L31"/>
    <property type="match status" value="1"/>
</dbReference>
<dbReference type="NCBIfam" id="NF000612">
    <property type="entry name" value="PRK00019.1"/>
    <property type="match status" value="1"/>
</dbReference>
<dbReference type="NCBIfam" id="NF001809">
    <property type="entry name" value="PRK00528.1"/>
    <property type="match status" value="1"/>
</dbReference>
<dbReference type="PANTHER" id="PTHR33280">
    <property type="entry name" value="50S RIBOSOMAL PROTEIN L31, CHLOROPLASTIC"/>
    <property type="match status" value="1"/>
</dbReference>
<dbReference type="PANTHER" id="PTHR33280:SF6">
    <property type="entry name" value="LARGE RIBOSOMAL SUBUNIT PROTEIN BL31A"/>
    <property type="match status" value="1"/>
</dbReference>
<dbReference type="Pfam" id="PF01197">
    <property type="entry name" value="Ribosomal_L31"/>
    <property type="match status" value="1"/>
</dbReference>
<dbReference type="PRINTS" id="PR01249">
    <property type="entry name" value="RIBOSOMALL31"/>
</dbReference>
<dbReference type="SUPFAM" id="SSF143800">
    <property type="entry name" value="L28p-like"/>
    <property type="match status" value="1"/>
</dbReference>
<dbReference type="PROSITE" id="PS01143">
    <property type="entry name" value="RIBOSOMAL_L31"/>
    <property type="match status" value="1"/>
</dbReference>
<protein>
    <recommendedName>
        <fullName evidence="1">Large ribosomal subunit protein bL31</fullName>
    </recommendedName>
    <alternativeName>
        <fullName evidence="2">50S ribosomal protein L31</fullName>
    </alternativeName>
</protein>
<gene>
    <name evidence="1" type="primary">rpmE</name>
    <name type="ordered locus">FTN_0278</name>
</gene>
<proteinExistence type="inferred from homology"/>
<evidence type="ECO:0000255" key="1">
    <source>
        <dbReference type="HAMAP-Rule" id="MF_00501"/>
    </source>
</evidence>
<evidence type="ECO:0000305" key="2"/>
<sequence length="71" mass="8132">MRQEIHPKYTEVTVTCSCGNTFVTRSTVGKKEMNIDICSECHPFYTGKQRIVDTAGRVDKFKKRFGGMKKI</sequence>